<proteinExistence type="evidence at transcript level"/>
<comment type="function">
    <text evidence="2 3 4">High affinity receptor that binds the activated thrombin, leading to calcium release from intracellular stores. The thrombin-activated receptor signaling pathway is mediated through PTX-insensitive G proteins, activation of phospholipase C resulting in the production of 1D-myo-inositol 1,4,5-trisphosphate (InsP3) which binds to InsP3 receptors causing calcium release from the stores (By similarity). In astrocytes, the calcium released into the cytosol allows the Ca(2+)-dependent release of L-glutamate into the synaptic cleft through BEST1, that targets the neuronal postsynaptic GRIN2A/NMDAR receptor resulting in the synaptic plasticity regulation (By similarity). May play a role in platelets activation and in vascular development (By similarity). Mediates up-regulation of pro-inflammatory cytokines, such as MCP-1/CCL2 and IL6, triggered by coagulation factor Xa (F10) in cardiac fibroblasts and umbilical vein endothelial cells (By similarity).</text>
</comment>
<comment type="subcellular location">
    <subcellularLocation>
        <location evidence="3">Cell membrane</location>
        <topology evidence="3">Multi-pass membrane protein</topology>
    </subcellularLocation>
</comment>
<comment type="domain">
    <text evidence="1">The cleaved signal peptide may not be degraded and may function as an intracellular angiogenesis inhibitor peptide known as parstatin.</text>
</comment>
<comment type="PTM">
    <text evidence="2">Proteolytic cleavage by thrombin generates a new N-terminus that functions as a tethered ligand. Also proteolytically cleaved by cathepsin CTSG. Cleavage at 41-Arg-|-Ser-42 by CTSG results in receptor activation while cleavage at 55-Phe-|-Trp-56 results in inhibition of receptor activation.</text>
</comment>
<comment type="PTM">
    <text evidence="1">Phosphorylated in the C-terminal tail; probably mediating desensitization prior to the uncoupling and internalization of the receptor.</text>
</comment>
<comment type="similarity">
    <text evidence="6">Belongs to the G-protein coupled receptor 1 family.</text>
</comment>
<dbReference type="EMBL" id="AF028727">
    <property type="protein sequence ID" value="AAB84191.1"/>
    <property type="molecule type" value="mRNA"/>
</dbReference>
<dbReference type="SMR" id="P56488"/>
<dbReference type="GlyCosmos" id="P56488">
    <property type="glycosylation" value="5 sites, No reported glycans"/>
</dbReference>
<dbReference type="GO" id="GO:0005901">
    <property type="term" value="C:caveola"/>
    <property type="evidence" value="ECO:0000250"/>
    <property type="project" value="UniProtKB"/>
</dbReference>
<dbReference type="GO" id="GO:0031594">
    <property type="term" value="C:neuromuscular junction"/>
    <property type="evidence" value="ECO:0000250"/>
    <property type="project" value="UniProtKB"/>
</dbReference>
<dbReference type="GO" id="GO:0005886">
    <property type="term" value="C:plasma membrane"/>
    <property type="evidence" value="ECO:0000250"/>
    <property type="project" value="UniProtKB"/>
</dbReference>
<dbReference type="GO" id="GO:0031094">
    <property type="term" value="C:platelet dense tubular network"/>
    <property type="evidence" value="ECO:0000250"/>
    <property type="project" value="UniProtKB"/>
</dbReference>
<dbReference type="GO" id="GO:0045211">
    <property type="term" value="C:postsynaptic membrane"/>
    <property type="evidence" value="ECO:0000250"/>
    <property type="project" value="UniProtKB"/>
</dbReference>
<dbReference type="GO" id="GO:0004930">
    <property type="term" value="F:G protein-coupled receptor activity"/>
    <property type="evidence" value="ECO:0000250"/>
    <property type="project" value="UniProtKB"/>
</dbReference>
<dbReference type="GO" id="GO:0001965">
    <property type="term" value="F:G-protein alpha-subunit binding"/>
    <property type="evidence" value="ECO:0000250"/>
    <property type="project" value="UniProtKB"/>
</dbReference>
<dbReference type="GO" id="GO:0031681">
    <property type="term" value="F:G-protein beta-subunit binding"/>
    <property type="evidence" value="ECO:0000250"/>
    <property type="project" value="UniProtKB"/>
</dbReference>
<dbReference type="GO" id="GO:0015057">
    <property type="term" value="F:thrombin-activated receptor activity"/>
    <property type="evidence" value="ECO:0000250"/>
    <property type="project" value="UniProtKB"/>
</dbReference>
<dbReference type="GO" id="GO:0002248">
    <property type="term" value="P:connective tissue replacement involved in inflammatory response wound healing"/>
    <property type="evidence" value="ECO:0000250"/>
    <property type="project" value="UniProtKB"/>
</dbReference>
<dbReference type="GO" id="GO:0007529">
    <property type="term" value="P:establishment of synaptic specificity at neuromuscular junction"/>
    <property type="evidence" value="ECO:0000250"/>
    <property type="project" value="UniProtKB"/>
</dbReference>
<dbReference type="GO" id="GO:0007186">
    <property type="term" value="P:G protein-coupled receptor signaling pathway"/>
    <property type="evidence" value="ECO:0000250"/>
    <property type="project" value="UniProtKB"/>
</dbReference>
<dbReference type="GO" id="GO:0048873">
    <property type="term" value="P:homeostasis of number of cells within a tissue"/>
    <property type="evidence" value="ECO:0000250"/>
    <property type="project" value="UniProtKB"/>
</dbReference>
<dbReference type="GO" id="GO:0006954">
    <property type="term" value="P:inflammatory response"/>
    <property type="evidence" value="ECO:0000250"/>
    <property type="project" value="UniProtKB"/>
</dbReference>
<dbReference type="GO" id="GO:0008285">
    <property type="term" value="P:negative regulation of cell population proliferation"/>
    <property type="evidence" value="ECO:0000250"/>
    <property type="project" value="UniProtKB"/>
</dbReference>
<dbReference type="GO" id="GO:0003105">
    <property type="term" value="P:negative regulation of glomerular filtration"/>
    <property type="evidence" value="ECO:0000250"/>
    <property type="project" value="UniProtKB"/>
</dbReference>
<dbReference type="GO" id="GO:0043524">
    <property type="term" value="P:negative regulation of neuron apoptotic process"/>
    <property type="evidence" value="ECO:0000250"/>
    <property type="project" value="UniProtKB"/>
</dbReference>
<dbReference type="GO" id="GO:1900134">
    <property type="term" value="P:negative regulation of renin secretion into blood stream"/>
    <property type="evidence" value="ECO:0000250"/>
    <property type="project" value="UniProtKB"/>
</dbReference>
<dbReference type="GO" id="GO:0007200">
    <property type="term" value="P:phospholipase C-activating G protein-coupled receptor signaling pathway"/>
    <property type="evidence" value="ECO:0000250"/>
    <property type="project" value="UniProtKB"/>
</dbReference>
<dbReference type="GO" id="GO:0030168">
    <property type="term" value="P:platelet activation"/>
    <property type="evidence" value="ECO:0000250"/>
    <property type="project" value="UniProtKB"/>
</dbReference>
<dbReference type="GO" id="GO:0043065">
    <property type="term" value="P:positive regulation of apoptotic process"/>
    <property type="evidence" value="ECO:0000250"/>
    <property type="project" value="UniProtKB"/>
</dbReference>
<dbReference type="GO" id="GO:0030194">
    <property type="term" value="P:positive regulation of blood coagulation"/>
    <property type="evidence" value="ECO:0000250"/>
    <property type="project" value="UniProtKB"/>
</dbReference>
<dbReference type="GO" id="GO:0051928">
    <property type="term" value="P:positive regulation of calcium ion transport"/>
    <property type="evidence" value="ECO:0000250"/>
    <property type="project" value="UniProtKB"/>
</dbReference>
<dbReference type="GO" id="GO:0043123">
    <property type="term" value="P:positive regulation of canonical NF-kappaB signal transduction"/>
    <property type="evidence" value="ECO:0000250"/>
    <property type="project" value="UniProtKB"/>
</dbReference>
<dbReference type="GO" id="GO:0030335">
    <property type="term" value="P:positive regulation of cell migration"/>
    <property type="evidence" value="ECO:0000250"/>
    <property type="project" value="UniProtKB"/>
</dbReference>
<dbReference type="GO" id="GO:0008284">
    <property type="term" value="P:positive regulation of cell population proliferation"/>
    <property type="evidence" value="ECO:0000250"/>
    <property type="project" value="UniProtKB"/>
</dbReference>
<dbReference type="GO" id="GO:0032967">
    <property type="term" value="P:positive regulation of collagen biosynthetic process"/>
    <property type="evidence" value="ECO:0000250"/>
    <property type="project" value="UniProtKB"/>
</dbReference>
<dbReference type="GO" id="GO:0007204">
    <property type="term" value="P:positive regulation of cytosolic calcium ion concentration"/>
    <property type="evidence" value="ECO:0000250"/>
    <property type="project" value="UniProtKB"/>
</dbReference>
<dbReference type="GO" id="GO:0045893">
    <property type="term" value="P:positive regulation of DNA-templated transcription"/>
    <property type="evidence" value="ECO:0000250"/>
    <property type="project" value="UniProtKB"/>
</dbReference>
<dbReference type="GO" id="GO:0070374">
    <property type="term" value="P:positive regulation of ERK1 and ERK2 cascade"/>
    <property type="evidence" value="ECO:0000250"/>
    <property type="project" value="UniProtKB"/>
</dbReference>
<dbReference type="GO" id="GO:0032755">
    <property type="term" value="P:positive regulation of interleukin-6 production"/>
    <property type="evidence" value="ECO:0000250"/>
    <property type="project" value="UniProtKB"/>
</dbReference>
<dbReference type="GO" id="GO:0032757">
    <property type="term" value="P:positive regulation of interleukin-8 production"/>
    <property type="evidence" value="ECO:0000250"/>
    <property type="project" value="UniProtKB"/>
</dbReference>
<dbReference type="GO" id="GO:0043410">
    <property type="term" value="P:positive regulation of MAPK cascade"/>
    <property type="evidence" value="ECO:0000250"/>
    <property type="project" value="UniProtKB"/>
</dbReference>
<dbReference type="GO" id="GO:0051897">
    <property type="term" value="P:positive regulation of phosphatidylinositol 3-kinase/protein kinase B signal transduction"/>
    <property type="evidence" value="ECO:0000250"/>
    <property type="project" value="UniProtKB"/>
</dbReference>
<dbReference type="GO" id="GO:0046427">
    <property type="term" value="P:positive regulation of receptor signaling pathway via JAK-STAT"/>
    <property type="evidence" value="ECO:0000250"/>
    <property type="project" value="UniProtKB"/>
</dbReference>
<dbReference type="GO" id="GO:0051281">
    <property type="term" value="P:positive regulation of release of sequestered calcium ion into cytosol"/>
    <property type="evidence" value="ECO:0000250"/>
    <property type="project" value="UniProtKB"/>
</dbReference>
<dbReference type="GO" id="GO:0035025">
    <property type="term" value="P:positive regulation of Rho protein signal transduction"/>
    <property type="evidence" value="ECO:0000250"/>
    <property type="project" value="UniProtKB"/>
</dbReference>
<dbReference type="GO" id="GO:0045987">
    <property type="term" value="P:positive regulation of smooth muscle contraction"/>
    <property type="evidence" value="ECO:0000250"/>
    <property type="project" value="UniProtKB"/>
</dbReference>
<dbReference type="GO" id="GO:0045907">
    <property type="term" value="P:positive regulation of vasoconstriction"/>
    <property type="evidence" value="ECO:0000250"/>
    <property type="project" value="UniProtKB"/>
</dbReference>
<dbReference type="GO" id="GO:0032651">
    <property type="term" value="P:regulation of interleukin-1 beta production"/>
    <property type="evidence" value="ECO:0000250"/>
    <property type="project" value="UniProtKB"/>
</dbReference>
<dbReference type="GO" id="GO:0048167">
    <property type="term" value="P:regulation of synaptic plasticity"/>
    <property type="evidence" value="ECO:0000250"/>
    <property type="project" value="UniProtKB"/>
</dbReference>
<dbReference type="GO" id="GO:0051209">
    <property type="term" value="P:release of sequestered calcium ion into cytosol"/>
    <property type="evidence" value="ECO:0000250"/>
    <property type="project" value="UniProtKB"/>
</dbReference>
<dbReference type="GO" id="GO:0032496">
    <property type="term" value="P:response to lipopolysaccharide"/>
    <property type="evidence" value="ECO:0000250"/>
    <property type="project" value="UniProtKB"/>
</dbReference>
<dbReference type="GO" id="GO:0009611">
    <property type="term" value="P:response to wounding"/>
    <property type="evidence" value="ECO:0000250"/>
    <property type="project" value="UniProtKB"/>
</dbReference>
<dbReference type="GO" id="GO:0070493">
    <property type="term" value="P:thrombin-activated receptor signaling pathway"/>
    <property type="evidence" value="ECO:0000250"/>
    <property type="project" value="UniProtKB"/>
</dbReference>
<dbReference type="CDD" id="cd15369">
    <property type="entry name" value="7tmA_PAR1"/>
    <property type="match status" value="1"/>
</dbReference>
<dbReference type="FunFam" id="1.20.1070.10:FF:000040">
    <property type="entry name" value="Coagulation factor 2 (thrombin) receptor"/>
    <property type="match status" value="1"/>
</dbReference>
<dbReference type="Gene3D" id="1.20.1070.10">
    <property type="entry name" value="Rhodopsin 7-helix transmembrane proteins"/>
    <property type="match status" value="1"/>
</dbReference>
<dbReference type="InterPro" id="IPR000276">
    <property type="entry name" value="GPCR_Rhodpsn"/>
</dbReference>
<dbReference type="InterPro" id="IPR017452">
    <property type="entry name" value="GPCR_Rhodpsn_7TM"/>
</dbReference>
<dbReference type="InterPro" id="IPR003912">
    <property type="entry name" value="Protea_act_rcpt"/>
</dbReference>
<dbReference type="InterPro" id="IPR000935">
    <property type="entry name" value="Thrmbn_rcpt"/>
</dbReference>
<dbReference type="PANTHER" id="PTHR24232">
    <property type="entry name" value="G-PROTEIN COUPLED RECEPTOR"/>
    <property type="match status" value="1"/>
</dbReference>
<dbReference type="PANTHER" id="PTHR24232:SF20">
    <property type="entry name" value="PROTEINASE-ACTIVATED RECEPTOR 1"/>
    <property type="match status" value="1"/>
</dbReference>
<dbReference type="Pfam" id="PF00001">
    <property type="entry name" value="7tm_1"/>
    <property type="match status" value="1"/>
</dbReference>
<dbReference type="PRINTS" id="PR00237">
    <property type="entry name" value="GPCRRHODOPSN"/>
</dbReference>
<dbReference type="PRINTS" id="PR01428">
    <property type="entry name" value="PROTEASEAR"/>
</dbReference>
<dbReference type="PRINTS" id="PR00908">
    <property type="entry name" value="THROMBINR"/>
</dbReference>
<dbReference type="SUPFAM" id="SSF81321">
    <property type="entry name" value="Family A G protein-coupled receptor-like"/>
    <property type="match status" value="1"/>
</dbReference>
<dbReference type="PROSITE" id="PS00237">
    <property type="entry name" value="G_PROTEIN_RECEP_F1_1"/>
    <property type="match status" value="1"/>
</dbReference>
<dbReference type="PROSITE" id="PS50262">
    <property type="entry name" value="G_PROTEIN_RECEP_F1_2"/>
    <property type="match status" value="1"/>
</dbReference>
<evidence type="ECO:0000250" key="1"/>
<evidence type="ECO:0000250" key="2">
    <source>
        <dbReference type="UniProtKB" id="P25116"/>
    </source>
</evidence>
<evidence type="ECO:0000250" key="3">
    <source>
        <dbReference type="UniProtKB" id="P26824"/>
    </source>
</evidence>
<evidence type="ECO:0000250" key="4">
    <source>
        <dbReference type="UniProtKB" id="P30558"/>
    </source>
</evidence>
<evidence type="ECO:0000255" key="5"/>
<evidence type="ECO:0000255" key="6">
    <source>
        <dbReference type="PROSITE-ProRule" id="PRU00521"/>
    </source>
</evidence>
<feature type="signal peptide" evidence="1">
    <location>
        <begin position="1"/>
        <end position="21"/>
    </location>
</feature>
<feature type="propeptide" id="PRO_0000012744" description="Removed for receptor activation" evidence="1">
    <location>
        <begin position="22"/>
        <end position="41"/>
    </location>
</feature>
<feature type="chain" id="PRO_0000012745" description="Proteinase-activated receptor 1">
    <location>
        <begin position="42"/>
        <end position="425"/>
    </location>
</feature>
<feature type="topological domain" description="Extracellular" evidence="5">
    <location>
        <begin position="42"/>
        <end position="102"/>
    </location>
</feature>
<feature type="transmembrane region" description="Helical; Name=1" evidence="5">
    <location>
        <begin position="103"/>
        <end position="128"/>
    </location>
</feature>
<feature type="topological domain" description="Cytoplasmic" evidence="5">
    <location>
        <begin position="129"/>
        <end position="137"/>
    </location>
</feature>
<feature type="transmembrane region" description="Helical; Name=2" evidence="5">
    <location>
        <begin position="138"/>
        <end position="157"/>
    </location>
</feature>
<feature type="topological domain" description="Extracellular" evidence="5">
    <location>
        <begin position="158"/>
        <end position="176"/>
    </location>
</feature>
<feature type="transmembrane region" description="Helical; Name=3" evidence="5">
    <location>
        <begin position="177"/>
        <end position="198"/>
    </location>
</feature>
<feature type="topological domain" description="Cytoplasmic" evidence="5">
    <location>
        <begin position="199"/>
        <end position="218"/>
    </location>
</feature>
<feature type="transmembrane region" description="Helical; Name=4" evidence="5">
    <location>
        <begin position="219"/>
        <end position="239"/>
    </location>
</feature>
<feature type="topological domain" description="Extracellular" evidence="5">
    <location>
        <begin position="240"/>
        <end position="268"/>
    </location>
</feature>
<feature type="transmembrane region" description="Helical; Name=5" evidence="5">
    <location>
        <begin position="269"/>
        <end position="288"/>
    </location>
</feature>
<feature type="topological domain" description="Cytoplasmic" evidence="5">
    <location>
        <begin position="289"/>
        <end position="311"/>
    </location>
</feature>
<feature type="transmembrane region" description="Helical; Name=6" evidence="5">
    <location>
        <begin position="312"/>
        <end position="334"/>
    </location>
</feature>
<feature type="topological domain" description="Extracellular" evidence="5">
    <location>
        <begin position="335"/>
        <end position="350"/>
    </location>
</feature>
<feature type="transmembrane region" description="Helical; Name=7" evidence="5">
    <location>
        <begin position="351"/>
        <end position="374"/>
    </location>
</feature>
<feature type="topological domain" description="Cytoplasmic" evidence="5">
    <location>
        <begin position="375"/>
        <end position="425"/>
    </location>
</feature>
<feature type="site" description="Cleavage; by thrombin and CTSG" evidence="2">
    <location>
        <begin position="41"/>
        <end position="42"/>
    </location>
</feature>
<feature type="site" description="Cleavage; by CTSG" evidence="2">
    <location>
        <begin position="55"/>
        <end position="56"/>
    </location>
</feature>
<feature type="modified residue" description="Phosphoserine" evidence="2">
    <location>
        <position position="418"/>
    </location>
</feature>
<feature type="glycosylation site" description="N-linked (GlcNAc...) asparagine" evidence="5">
    <location>
        <position position="35"/>
    </location>
</feature>
<feature type="glycosylation site" description="N-linked (GlcNAc...) asparagine" evidence="5">
    <location>
        <position position="62"/>
    </location>
</feature>
<feature type="glycosylation site" description="N-linked (GlcNAc...) asparagine" evidence="5">
    <location>
        <position position="75"/>
    </location>
</feature>
<feature type="glycosylation site" description="N-linked (GlcNAc...) asparagine" evidence="5">
    <location>
        <position position="250"/>
    </location>
</feature>
<feature type="glycosylation site" description="N-linked (GlcNAc...) asparagine" evidence="5">
    <location>
        <position position="259"/>
    </location>
</feature>
<feature type="disulfide bond" evidence="6">
    <location>
        <begin position="175"/>
        <end position="254"/>
    </location>
</feature>
<reference key="1">
    <citation type="submission" date="1997-11" db="EMBL/GenBank/DDBJ databases">
        <authorList>
            <person name="Shoji M."/>
            <person name="Hayzer D.J."/>
            <person name="Hanson S.R."/>
        </authorList>
    </citation>
    <scope>NUCLEOTIDE SEQUENCE [MRNA]</scope>
</reference>
<keyword id="KW-0094">Blood coagulation</keyword>
<keyword id="KW-1003">Cell membrane</keyword>
<keyword id="KW-1015">Disulfide bond</keyword>
<keyword id="KW-0297">G-protein coupled receptor</keyword>
<keyword id="KW-0325">Glycoprotein</keyword>
<keyword id="KW-0356">Hemostasis</keyword>
<keyword id="KW-0472">Membrane</keyword>
<keyword id="KW-0597">Phosphoprotein</keyword>
<keyword id="KW-0675">Receptor</keyword>
<keyword id="KW-0732">Signal</keyword>
<keyword id="KW-0807">Transducer</keyword>
<keyword id="KW-0812">Transmembrane</keyword>
<keyword id="KW-1133">Transmembrane helix</keyword>
<gene>
    <name evidence="2" type="primary">F2R</name>
    <name type="synonym">BTHR12</name>
    <name type="synonym">PAR1</name>
</gene>
<protein>
    <recommendedName>
        <fullName evidence="2">Proteinase-activated receptor 1</fullName>
        <shortName>PAR-1</shortName>
    </recommendedName>
    <alternativeName>
        <fullName>Thrombin receptor</fullName>
    </alternativeName>
</protein>
<organism>
    <name type="scientific">Papio hamadryas</name>
    <name type="common">Hamadryas baboon</name>
    <dbReference type="NCBI Taxonomy" id="9557"/>
    <lineage>
        <taxon>Eukaryota</taxon>
        <taxon>Metazoa</taxon>
        <taxon>Chordata</taxon>
        <taxon>Craniata</taxon>
        <taxon>Vertebrata</taxon>
        <taxon>Euteleostomi</taxon>
        <taxon>Mammalia</taxon>
        <taxon>Eutheria</taxon>
        <taxon>Euarchontoglires</taxon>
        <taxon>Primates</taxon>
        <taxon>Haplorrhini</taxon>
        <taxon>Catarrhini</taxon>
        <taxon>Cercopithecidae</taxon>
        <taxon>Cercopithecinae</taxon>
        <taxon>Papio</taxon>
    </lineage>
</organism>
<name>PAR1_PAPHA</name>
<accession>P56488</accession>
<sequence>MGPRRLLLVAACLCLCGPLLSARTRARRPASKATNATLDPRSFLLRNPNDKYEPFWEDEEKNESGLTEYRLVSINKSSPLQKPLPAFISEDASGYLTSSWLTLFVPSVYTGVFVVSLPVNIMAIVVFILKMKVKKPAVVYMLHLATADVLFVSVLPFKISYYLSGSDWQFGSELCRFVTAAFYCNMYASILLMTVISIDRFLAVVYPMQSLSWRTLGRASFTCLAIWALAIAGVVPLLLKEQTIQVPGLNITTCHDVLNETLLEGYYAYYFSAFSAVFFFVPLIISTVCYVSIIRCLSSSTVANRSKKSRALFLSAAVFCIFIICFGPTNILLIAHYSFLSHTSTTEAAYFAYLLCVCVSSISCCIDPLIYYYASSECQRYVYSILCCKESSDPSSSNSSGQLMASKMDTCSSNLNNSIYKKLLT</sequence>